<proteinExistence type="evidence at transcript level"/>
<name>IREB2_XENLA</name>
<dbReference type="EMBL" id="BC068915">
    <property type="protein sequence ID" value="AAH68915.1"/>
    <property type="molecule type" value="mRNA"/>
</dbReference>
<dbReference type="RefSeq" id="NP_001084628.1">
    <property type="nucleotide sequence ID" value="NM_001091159.1"/>
</dbReference>
<dbReference type="SMR" id="Q6NTP2"/>
<dbReference type="DNASU" id="414584"/>
<dbReference type="GeneID" id="414584"/>
<dbReference type="KEGG" id="xla:414584"/>
<dbReference type="AGR" id="Xenbase:XB-GENE-943202"/>
<dbReference type="CTD" id="414584"/>
<dbReference type="Xenbase" id="XB-GENE-943202">
    <property type="gene designation" value="ireb2.L"/>
</dbReference>
<dbReference type="OrthoDB" id="2279155at2759"/>
<dbReference type="Proteomes" id="UP000186698">
    <property type="component" value="Chromosome 3L"/>
</dbReference>
<dbReference type="Bgee" id="414584">
    <property type="expression patterns" value="Expressed in muscle tissue and 19 other cell types or tissues"/>
</dbReference>
<dbReference type="GO" id="GO:0005829">
    <property type="term" value="C:cytosol"/>
    <property type="evidence" value="ECO:0000318"/>
    <property type="project" value="GO_Central"/>
</dbReference>
<dbReference type="GO" id="GO:0051539">
    <property type="term" value="F:4 iron, 4 sulfur cluster binding"/>
    <property type="evidence" value="ECO:0000318"/>
    <property type="project" value="GO_Central"/>
</dbReference>
<dbReference type="GO" id="GO:0003994">
    <property type="term" value="F:aconitate hydratase activity"/>
    <property type="evidence" value="ECO:0000318"/>
    <property type="project" value="GO_Central"/>
</dbReference>
<dbReference type="GO" id="GO:0030350">
    <property type="term" value="F:iron-responsive element binding"/>
    <property type="evidence" value="ECO:0000318"/>
    <property type="project" value="GO_Central"/>
</dbReference>
<dbReference type="GO" id="GO:0046872">
    <property type="term" value="F:metal ion binding"/>
    <property type="evidence" value="ECO:0007669"/>
    <property type="project" value="UniProtKB-KW"/>
</dbReference>
<dbReference type="GO" id="GO:0006879">
    <property type="term" value="P:intracellular iron ion homeostasis"/>
    <property type="evidence" value="ECO:0000250"/>
    <property type="project" value="UniProtKB"/>
</dbReference>
<dbReference type="CDD" id="cd01580">
    <property type="entry name" value="AcnA_IRP_Swivel"/>
    <property type="match status" value="1"/>
</dbReference>
<dbReference type="FunFam" id="3.30.499.10:FF:000005">
    <property type="entry name" value="cytoplasmic aconitate hydratase"/>
    <property type="match status" value="1"/>
</dbReference>
<dbReference type="FunFam" id="3.30.499.10:FF:000011">
    <property type="entry name" value="Iron-responsive element binding protein 2"/>
    <property type="match status" value="1"/>
</dbReference>
<dbReference type="FunFam" id="3.30.499.10:FF:000012">
    <property type="entry name" value="Iron-responsive element binding protein 2"/>
    <property type="match status" value="1"/>
</dbReference>
<dbReference type="FunFam" id="3.20.19.10:FF:000005">
    <property type="entry name" value="Iron-responsive element-binding protein 2"/>
    <property type="match status" value="1"/>
</dbReference>
<dbReference type="Gene3D" id="6.10.190.10">
    <property type="match status" value="1"/>
</dbReference>
<dbReference type="Gene3D" id="3.30.499.10">
    <property type="entry name" value="Aconitase, domain 3"/>
    <property type="match status" value="3"/>
</dbReference>
<dbReference type="Gene3D" id="3.20.19.10">
    <property type="entry name" value="Aconitase, domain 4"/>
    <property type="match status" value="1"/>
</dbReference>
<dbReference type="InterPro" id="IPR044137">
    <property type="entry name" value="AcnA_IRP_Swivel"/>
</dbReference>
<dbReference type="InterPro" id="IPR015931">
    <property type="entry name" value="Acnase/IPM_dHydase_lsu_aba_1/3"/>
</dbReference>
<dbReference type="InterPro" id="IPR001030">
    <property type="entry name" value="Acoase/IPM_deHydtase_lsu_aba"/>
</dbReference>
<dbReference type="InterPro" id="IPR015928">
    <property type="entry name" value="Aconitase/3IPM_dehydase_swvl"/>
</dbReference>
<dbReference type="InterPro" id="IPR006249">
    <property type="entry name" value="Aconitase/IRP2"/>
</dbReference>
<dbReference type="InterPro" id="IPR018136">
    <property type="entry name" value="Aconitase_4Fe-4S_BS"/>
</dbReference>
<dbReference type="InterPro" id="IPR036008">
    <property type="entry name" value="Aconitase_4Fe-4S_dom"/>
</dbReference>
<dbReference type="InterPro" id="IPR000573">
    <property type="entry name" value="AconitaseA/IPMdHydase_ssu_swvl"/>
</dbReference>
<dbReference type="NCBIfam" id="TIGR01341">
    <property type="entry name" value="aconitase_1"/>
    <property type="match status" value="1"/>
</dbReference>
<dbReference type="NCBIfam" id="NF006757">
    <property type="entry name" value="PRK09277.1"/>
    <property type="match status" value="1"/>
</dbReference>
<dbReference type="NCBIfam" id="NF009520">
    <property type="entry name" value="PRK12881.1"/>
    <property type="match status" value="1"/>
</dbReference>
<dbReference type="PANTHER" id="PTHR11670">
    <property type="entry name" value="ACONITASE/IRON-RESPONSIVE ELEMENT FAMILY MEMBER"/>
    <property type="match status" value="1"/>
</dbReference>
<dbReference type="Pfam" id="PF00330">
    <property type="entry name" value="Aconitase"/>
    <property type="match status" value="2"/>
</dbReference>
<dbReference type="Pfam" id="PF00694">
    <property type="entry name" value="Aconitase_C"/>
    <property type="match status" value="1"/>
</dbReference>
<dbReference type="PRINTS" id="PR00415">
    <property type="entry name" value="ACONITASE"/>
</dbReference>
<dbReference type="SUPFAM" id="SSF53732">
    <property type="entry name" value="Aconitase iron-sulfur domain"/>
    <property type="match status" value="1"/>
</dbReference>
<dbReference type="SUPFAM" id="SSF52016">
    <property type="entry name" value="LeuD/IlvD-like"/>
    <property type="match status" value="1"/>
</dbReference>
<dbReference type="PROSITE" id="PS00450">
    <property type="entry name" value="ACONITASE_1"/>
    <property type="match status" value="1"/>
</dbReference>
<evidence type="ECO:0000250" key="1"/>
<evidence type="ECO:0000305" key="2"/>
<feature type="chain" id="PRO_0000380117" description="Iron-responsive element-binding protein 2">
    <location>
        <begin position="1"/>
        <end position="955"/>
    </location>
</feature>
<feature type="binding site" evidence="1">
    <location>
        <position position="504"/>
    </location>
    <ligand>
        <name>[4Fe-4S] cluster</name>
        <dbReference type="ChEBI" id="CHEBI:49883"/>
    </ligand>
</feature>
<feature type="binding site" evidence="1">
    <location>
        <position position="570"/>
    </location>
    <ligand>
        <name>[4Fe-4S] cluster</name>
        <dbReference type="ChEBI" id="CHEBI:49883"/>
    </ligand>
</feature>
<feature type="binding site" evidence="1">
    <location>
        <position position="573"/>
    </location>
    <ligand>
        <name>[4Fe-4S] cluster</name>
        <dbReference type="ChEBI" id="CHEBI:49883"/>
    </ligand>
</feature>
<comment type="function">
    <text>RNA-binding protein that binds to iron-responsive elements (IRES), which are stem-loop structures found in the 5'-UTR of ferritin, and delta aminolevulinic acid synthase mRNAs, and in the 3'-UTR of transferrin receptor mRNA. Binding to the IRE element in ferritin results in the repression of its mRNA translation. Binding of the protein to the transferrin receptor mRNA inhibits the degradation of this otherwise rapidly degraded mRNA.</text>
</comment>
<comment type="cofactor">
    <cofactor evidence="1">
        <name>[4Fe-4S] cluster</name>
        <dbReference type="ChEBI" id="CHEBI:49883"/>
    </cofactor>
    <text evidence="1">Binds 1 [4Fe-4S] cluster per subunit. [4Fe-4S]-binding affects RNA-binding activity, thereby inhibiting activity of the protein.</text>
</comment>
<comment type="subcellular location">
    <subcellularLocation>
        <location evidence="1">Cytoplasm</location>
    </subcellularLocation>
</comment>
<comment type="PTM">
    <text evidence="1">Ubiquitinated and degraded by the proteasome in presence of high level of iron and oxygen.</text>
</comment>
<comment type="similarity">
    <text evidence="2">Belongs to the aconitase/IPM isomerase family.</text>
</comment>
<gene>
    <name type="primary">ireb2</name>
</gene>
<organism>
    <name type="scientific">Xenopus laevis</name>
    <name type="common">African clawed frog</name>
    <dbReference type="NCBI Taxonomy" id="8355"/>
    <lineage>
        <taxon>Eukaryota</taxon>
        <taxon>Metazoa</taxon>
        <taxon>Chordata</taxon>
        <taxon>Craniata</taxon>
        <taxon>Vertebrata</taxon>
        <taxon>Euteleostomi</taxon>
        <taxon>Amphibia</taxon>
        <taxon>Batrachia</taxon>
        <taxon>Anura</taxon>
        <taxon>Pipoidea</taxon>
        <taxon>Pipidae</taxon>
        <taxon>Xenopodinae</taxon>
        <taxon>Xenopus</taxon>
        <taxon>Xenopus</taxon>
    </lineage>
</organism>
<keyword id="KW-0004">4Fe-4S</keyword>
<keyword id="KW-0963">Cytoplasm</keyword>
<keyword id="KW-0408">Iron</keyword>
<keyword id="KW-0411">Iron-sulfur</keyword>
<keyword id="KW-0479">Metal-binding</keyword>
<keyword id="KW-0597">Phosphoprotein</keyword>
<keyword id="KW-1185">Reference proteome</keyword>
<keyword id="KW-0694">RNA-binding</keyword>
<keyword id="KW-0832">Ubl conjugation</keyword>
<accession>Q6NTP2</accession>
<sequence>MTENPFHYLVETLSGTSDKTFFNVSKLKATEYDSLPYCIRVVLEAVVRNCDGVLVKEQDAFNILNWKTKCEFKEIPFLPARVMLQDFTGIPAMVDFAAMRDAISKFGKDPKQVNPACPTDLIADHSLQLDFTKCIAAQNVSGLPAVETHRPTTTPGKTPGRKAQCRSQGGCKGACDLGAANGSSREQIENTPMLCPFHLQPIAEPETALKSLEIEFNRNKERLQFFKWCSKAFQNVAVIPPETGTVHQVNLEFLSRVVMEEKGCIYPDSVLGTDSHTTMVNGLGILGLGVGGIESEAAMLGVPITLTLPEVVGCELTGTINPIATSIDVVLSITKHLKQAGVAGTFVEFFGNGVSQLSVADRTTIANMCPEYGATVAFFPVDSVTLQHLKQTGVDLQCVKTFENYLKAVKLLRQENVQQPLYSKVLQINLNSIVPYVSGPKRPQDRISVMDMKKDFETCLKEKTGLKGFQIPEEKQNIMVPVTYGNSEYSLSHGCVVIAAVTSCTNNCNPSVMLTAGLLAKKAVEAGLTVKPYIKTSLSPGSGTVTYYLSASGVLPYLSKLGFDIIGYGCARCVGNTNPLPESIVTAIKEGELVACGVFSGNKHFEGNRCSCVCANYLASPPLVVAYALAGTVNIDLQTEPLGENAQGKKIFLQDIWPSREEVLEVEETLVIPSMFSELKLKIEKQNTRWNLLDAPESTLFPWDLRSTYIRSPPFFHKLEKIPPPIQPIERAYVLLYLGDSVTTDHMSPAGSIPRTSPAAKYLMQKNLVPREFNSYGARRGNDAVMTRGTFANMKLFNKLVGKTGPKTIHLPSGQTMDVFDAAELYQRSEIPLIIIAGKKYGLGNSRDWAAKGPFLLGVRVVIAESYEKIHKDHLVGMGIAPLQFLSGENAETLGLSGKEQYSLSLPVDLTPGHKVEIKTNTGKIFHVIAAFDNEAEVTLYKHGGILSYVARKYL</sequence>
<protein>
    <recommendedName>
        <fullName>Iron-responsive element-binding protein 2</fullName>
        <shortName>IRE-BP 2</shortName>
    </recommendedName>
</protein>
<reference key="1">
    <citation type="submission" date="2004-04" db="EMBL/GenBank/DDBJ databases">
        <authorList>
            <consortium name="NIH - Xenopus Gene Collection (XGC) project"/>
        </authorList>
    </citation>
    <scope>NUCLEOTIDE SEQUENCE [LARGE SCALE MRNA]</scope>
    <source>
        <tissue>Ovary</tissue>
    </source>
</reference>